<gene>
    <name evidence="1" type="primary">argJ</name>
    <name type="ordered locus">AF_1147</name>
</gene>
<proteinExistence type="inferred from homology"/>
<protein>
    <recommendedName>
        <fullName evidence="1">Arginine biosynthesis bifunctional protein ArgJ</fullName>
    </recommendedName>
    <domain>
        <recommendedName>
            <fullName evidence="1">Glutamate N-acetyltransferase</fullName>
            <ecNumber evidence="1">2.3.1.35</ecNumber>
        </recommendedName>
        <alternativeName>
            <fullName evidence="1">Ornithine acetyltransferase</fullName>
            <shortName evidence="1">OATase</shortName>
        </alternativeName>
        <alternativeName>
            <fullName evidence="1">Ornithine transacetylase</fullName>
        </alternativeName>
    </domain>
    <domain>
        <recommendedName>
            <fullName evidence="1">Amino-acid acetyltransferase</fullName>
            <ecNumber evidence="1">2.3.1.1</ecNumber>
        </recommendedName>
        <alternativeName>
            <fullName evidence="1">N-acetylglutamate synthase</fullName>
            <shortName evidence="1">AGSase</shortName>
        </alternativeName>
    </domain>
    <component>
        <recommendedName>
            <fullName evidence="1">Arginine biosynthesis bifunctional protein ArgJ alpha chain</fullName>
        </recommendedName>
    </component>
    <component>
        <recommendedName>
            <fullName evidence="1">Arginine biosynthesis bifunctional protein ArgJ beta chain</fullName>
        </recommendedName>
    </component>
</protein>
<accession>O29118</accession>
<reference key="1">
    <citation type="journal article" date="1997" name="Nature">
        <title>The complete genome sequence of the hyperthermophilic, sulphate-reducing archaeon Archaeoglobus fulgidus.</title>
        <authorList>
            <person name="Klenk H.-P."/>
            <person name="Clayton R.A."/>
            <person name="Tomb J.-F."/>
            <person name="White O."/>
            <person name="Nelson K.E."/>
            <person name="Ketchum K.A."/>
            <person name="Dodson R.J."/>
            <person name="Gwinn M.L."/>
            <person name="Hickey E.K."/>
            <person name="Peterson J.D."/>
            <person name="Richardson D.L."/>
            <person name="Kerlavage A.R."/>
            <person name="Graham D.E."/>
            <person name="Kyrpides N.C."/>
            <person name="Fleischmann R.D."/>
            <person name="Quackenbush J."/>
            <person name="Lee N.H."/>
            <person name="Sutton G.G."/>
            <person name="Gill S.R."/>
            <person name="Kirkness E.F."/>
            <person name="Dougherty B.A."/>
            <person name="McKenney K."/>
            <person name="Adams M.D."/>
            <person name="Loftus B.J."/>
            <person name="Peterson S.N."/>
            <person name="Reich C.I."/>
            <person name="McNeil L.K."/>
            <person name="Badger J.H."/>
            <person name="Glodek A."/>
            <person name="Zhou L."/>
            <person name="Overbeek R."/>
            <person name="Gocayne J.D."/>
            <person name="Weidman J.F."/>
            <person name="McDonald L.A."/>
            <person name="Utterback T.R."/>
            <person name="Cotton M.D."/>
            <person name="Spriggs T."/>
            <person name="Artiach P."/>
            <person name="Kaine B.P."/>
            <person name="Sykes S.M."/>
            <person name="Sadow P.W."/>
            <person name="D'Andrea K.P."/>
            <person name="Bowman C."/>
            <person name="Fujii C."/>
            <person name="Garland S.A."/>
            <person name="Mason T.M."/>
            <person name="Olsen G.J."/>
            <person name="Fraser C.M."/>
            <person name="Smith H.O."/>
            <person name="Woese C.R."/>
            <person name="Venter J.C."/>
        </authorList>
    </citation>
    <scope>NUCLEOTIDE SEQUENCE [LARGE SCALE GENOMIC DNA]</scope>
    <source>
        <strain>ATCC 49558 / DSM 4304 / JCM 9628 / NBRC 100126 / VC-16</strain>
    </source>
</reference>
<sequence>MEITDIGGVLCNGIKEGKYGLGLVRVRGSIAGVFTQNKIRAAPVIVCEENIRDGVVEGVIVNSGNANAYTGEQGMRDAREMCRIAANLLGCEERRVAVASTGVIGRKLDMEWIRKKAPEVYSGLGNSVENAERFGRAIVTTDRFVKKAYSEKARIAAVAKGAGMIAPNMATMLCFAFTSAKFDSGELYDMLRRAADKTFNRLTVDGDTSTNDTVLLISTGKERVERDVFEEELCSVFYSIAKQMARDGEGATKVFEVRVDGARNDEDANLIARAVASSLLVKTAIFGCDPNWGRIIAAAGYSGADVDERITLSLSDGRDEVFLIDSGRPLGNEERARVLMEKAEELVIRLRLEKGNGKGFAIGCDLTYDYVKLNAEYTT</sequence>
<name>ARGJ_ARCFU</name>
<feature type="chain" id="PRO_0000002269" description="Arginine biosynthesis bifunctional protein ArgJ alpha chain" evidence="1">
    <location>
        <begin position="1"/>
        <end position="170"/>
    </location>
</feature>
<feature type="chain" id="PRO_0000002270" description="Arginine biosynthesis bifunctional protein ArgJ beta chain" evidence="1">
    <location>
        <begin position="171"/>
        <end position="379"/>
    </location>
</feature>
<feature type="active site" description="Nucleophile" evidence="1">
    <location>
        <position position="171"/>
    </location>
</feature>
<feature type="binding site" evidence="1">
    <location>
        <position position="140"/>
    </location>
    <ligand>
        <name>substrate</name>
    </ligand>
</feature>
<feature type="binding site" evidence="1">
    <location>
        <position position="160"/>
    </location>
    <ligand>
        <name>substrate</name>
    </ligand>
</feature>
<feature type="binding site" evidence="1">
    <location>
        <position position="171"/>
    </location>
    <ligand>
        <name>substrate</name>
    </ligand>
</feature>
<feature type="binding site" evidence="1">
    <location>
        <position position="249"/>
    </location>
    <ligand>
        <name>substrate</name>
    </ligand>
</feature>
<feature type="binding site" evidence="1">
    <location>
        <position position="374"/>
    </location>
    <ligand>
        <name>substrate</name>
    </ligand>
</feature>
<feature type="binding site" evidence="1">
    <location>
        <position position="379"/>
    </location>
    <ligand>
        <name>substrate</name>
    </ligand>
</feature>
<feature type="site" description="Involved in the stabilization of negative charge on the oxyanion by the formation of the oxyanion hole" evidence="1">
    <location>
        <position position="101"/>
    </location>
</feature>
<feature type="site" description="Involved in the stabilization of negative charge on the oxyanion by the formation of the oxyanion hole" evidence="1">
    <location>
        <position position="102"/>
    </location>
</feature>
<feature type="site" description="Cleavage; by autolysis" evidence="1">
    <location>
        <begin position="170"/>
        <end position="171"/>
    </location>
</feature>
<comment type="function">
    <text evidence="1">Catalyzes two activities which are involved in the cyclic version of arginine biosynthesis: the synthesis of N-acetylglutamate from glutamate and acetyl-CoA as the acetyl donor, and of ornithine by transacetylation between N(2)-acetylornithine and glutamate.</text>
</comment>
<comment type="catalytic activity">
    <reaction evidence="1">
        <text>N(2)-acetyl-L-ornithine + L-glutamate = N-acetyl-L-glutamate + L-ornithine</text>
        <dbReference type="Rhea" id="RHEA:15349"/>
        <dbReference type="ChEBI" id="CHEBI:29985"/>
        <dbReference type="ChEBI" id="CHEBI:44337"/>
        <dbReference type="ChEBI" id="CHEBI:46911"/>
        <dbReference type="ChEBI" id="CHEBI:57805"/>
        <dbReference type="EC" id="2.3.1.35"/>
    </reaction>
</comment>
<comment type="catalytic activity">
    <reaction evidence="1">
        <text>L-glutamate + acetyl-CoA = N-acetyl-L-glutamate + CoA + H(+)</text>
        <dbReference type="Rhea" id="RHEA:24292"/>
        <dbReference type="ChEBI" id="CHEBI:15378"/>
        <dbReference type="ChEBI" id="CHEBI:29985"/>
        <dbReference type="ChEBI" id="CHEBI:44337"/>
        <dbReference type="ChEBI" id="CHEBI:57287"/>
        <dbReference type="ChEBI" id="CHEBI:57288"/>
        <dbReference type="EC" id="2.3.1.1"/>
    </reaction>
</comment>
<comment type="pathway">
    <text evidence="1">Amino-acid biosynthesis; L-arginine biosynthesis; L-ornithine and N-acetyl-L-glutamate from L-glutamate and N(2)-acetyl-L-ornithine (cyclic): step 1/1.</text>
</comment>
<comment type="pathway">
    <text evidence="1">Amino-acid biosynthesis; L-arginine biosynthesis; N(2)-acetyl-L-ornithine from L-glutamate: step 1/4.</text>
</comment>
<comment type="subunit">
    <text evidence="1">Heterotetramer of two alpha and two beta chains.</text>
</comment>
<comment type="subcellular location">
    <subcellularLocation>
        <location evidence="1">Cytoplasm</location>
    </subcellularLocation>
</comment>
<comment type="similarity">
    <text evidence="1">Belongs to the ArgJ family.</text>
</comment>
<evidence type="ECO:0000255" key="1">
    <source>
        <dbReference type="HAMAP-Rule" id="MF_01106"/>
    </source>
</evidence>
<organism>
    <name type="scientific">Archaeoglobus fulgidus (strain ATCC 49558 / DSM 4304 / JCM 9628 / NBRC 100126 / VC-16)</name>
    <dbReference type="NCBI Taxonomy" id="224325"/>
    <lineage>
        <taxon>Archaea</taxon>
        <taxon>Methanobacteriati</taxon>
        <taxon>Methanobacteriota</taxon>
        <taxon>Archaeoglobi</taxon>
        <taxon>Archaeoglobales</taxon>
        <taxon>Archaeoglobaceae</taxon>
        <taxon>Archaeoglobus</taxon>
    </lineage>
</organism>
<keyword id="KW-0012">Acyltransferase</keyword>
<keyword id="KW-0028">Amino-acid biosynthesis</keyword>
<keyword id="KW-0055">Arginine biosynthesis</keyword>
<keyword id="KW-0068">Autocatalytic cleavage</keyword>
<keyword id="KW-0963">Cytoplasm</keyword>
<keyword id="KW-0511">Multifunctional enzyme</keyword>
<keyword id="KW-1185">Reference proteome</keyword>
<keyword id="KW-0808">Transferase</keyword>
<dbReference type="EC" id="2.3.1.35" evidence="1"/>
<dbReference type="EC" id="2.3.1.1" evidence="1"/>
<dbReference type="EMBL" id="AE000782">
    <property type="protein sequence ID" value="AAB90096.1"/>
    <property type="molecule type" value="Genomic_DNA"/>
</dbReference>
<dbReference type="PIR" id="B69393">
    <property type="entry name" value="B69393"/>
</dbReference>
<dbReference type="RefSeq" id="WP_010878643.1">
    <property type="nucleotide sequence ID" value="NC_000917.1"/>
</dbReference>
<dbReference type="SMR" id="O29118"/>
<dbReference type="STRING" id="224325.AF_1147"/>
<dbReference type="MEROPS" id="T05.002"/>
<dbReference type="PaxDb" id="224325-AF_1147"/>
<dbReference type="DNASU" id="1484371"/>
<dbReference type="EnsemblBacteria" id="AAB90096">
    <property type="protein sequence ID" value="AAB90096"/>
    <property type="gene ID" value="AF_1147"/>
</dbReference>
<dbReference type="GeneID" id="24794753"/>
<dbReference type="KEGG" id="afu:AF_1147"/>
<dbReference type="eggNOG" id="arCOG04413">
    <property type="taxonomic scope" value="Archaea"/>
</dbReference>
<dbReference type="HOGENOM" id="CLU_027172_1_0_2"/>
<dbReference type="OrthoDB" id="52592at2157"/>
<dbReference type="PhylomeDB" id="O29118"/>
<dbReference type="UniPathway" id="UPA00068">
    <property type="reaction ID" value="UER00106"/>
</dbReference>
<dbReference type="UniPathway" id="UPA00068">
    <property type="reaction ID" value="UER00111"/>
</dbReference>
<dbReference type="Proteomes" id="UP000002199">
    <property type="component" value="Chromosome"/>
</dbReference>
<dbReference type="GO" id="GO:0005737">
    <property type="term" value="C:cytoplasm"/>
    <property type="evidence" value="ECO:0007669"/>
    <property type="project" value="UniProtKB-SubCell"/>
</dbReference>
<dbReference type="GO" id="GO:0004358">
    <property type="term" value="F:glutamate N-acetyltransferase activity"/>
    <property type="evidence" value="ECO:0007669"/>
    <property type="project" value="UniProtKB-UniRule"/>
</dbReference>
<dbReference type="GO" id="GO:0004042">
    <property type="term" value="F:L-glutamate N-acetyltransferase activity"/>
    <property type="evidence" value="ECO:0007669"/>
    <property type="project" value="UniProtKB-UniRule"/>
</dbReference>
<dbReference type="GO" id="GO:0006526">
    <property type="term" value="P:L-arginine biosynthetic process"/>
    <property type="evidence" value="ECO:0007669"/>
    <property type="project" value="UniProtKB-UniRule"/>
</dbReference>
<dbReference type="GO" id="GO:0006592">
    <property type="term" value="P:ornithine biosynthetic process"/>
    <property type="evidence" value="ECO:0007669"/>
    <property type="project" value="TreeGrafter"/>
</dbReference>
<dbReference type="CDD" id="cd02152">
    <property type="entry name" value="OAT"/>
    <property type="match status" value="1"/>
</dbReference>
<dbReference type="Gene3D" id="3.10.20.340">
    <property type="entry name" value="ArgJ beta chain, C-terminal domain"/>
    <property type="match status" value="1"/>
</dbReference>
<dbReference type="Gene3D" id="3.60.70.12">
    <property type="entry name" value="L-amino peptidase D-ALA esterase/amidase"/>
    <property type="match status" value="1"/>
</dbReference>
<dbReference type="HAMAP" id="MF_01106">
    <property type="entry name" value="ArgJ"/>
    <property type="match status" value="1"/>
</dbReference>
<dbReference type="InterPro" id="IPR002813">
    <property type="entry name" value="Arg_biosynth_ArgJ"/>
</dbReference>
<dbReference type="InterPro" id="IPR016117">
    <property type="entry name" value="ArgJ-like_dom_sf"/>
</dbReference>
<dbReference type="InterPro" id="IPR042195">
    <property type="entry name" value="ArgJ_beta_C"/>
</dbReference>
<dbReference type="NCBIfam" id="TIGR00120">
    <property type="entry name" value="ArgJ"/>
    <property type="match status" value="1"/>
</dbReference>
<dbReference type="NCBIfam" id="NF003802">
    <property type="entry name" value="PRK05388.1"/>
    <property type="match status" value="1"/>
</dbReference>
<dbReference type="PANTHER" id="PTHR23100">
    <property type="entry name" value="ARGININE BIOSYNTHESIS BIFUNCTIONAL PROTEIN ARGJ"/>
    <property type="match status" value="1"/>
</dbReference>
<dbReference type="PANTHER" id="PTHR23100:SF0">
    <property type="entry name" value="ARGININE BIOSYNTHESIS BIFUNCTIONAL PROTEIN ARGJ, MITOCHONDRIAL"/>
    <property type="match status" value="1"/>
</dbReference>
<dbReference type="Pfam" id="PF01960">
    <property type="entry name" value="ArgJ"/>
    <property type="match status" value="1"/>
</dbReference>
<dbReference type="SUPFAM" id="SSF56266">
    <property type="entry name" value="DmpA/ArgJ-like"/>
    <property type="match status" value="1"/>
</dbReference>